<sequence>MVNTMTWHDVLAEEKEKPYFRNTLARVAAERAAGKTVYPPQTDVFNAFRLTELGGVKVVILGQDPYHGPNQAHGLAFSVLPGVPVPPSLVNMYKELVTDIPGFERPNHGFLESWARQGVMLLNTVLTVEAGQAHSHVKFGWETFTDNVIAAINQHREGVVFLLWGAHAQKKGSIIDRKRHHVLHAPHPSPLSAHRGFFGSAHFSQANRWLTEHGESAIDWMPQLPAR</sequence>
<name>UNG_ERWT9</name>
<organism>
    <name type="scientific">Erwinia tasmaniensis (strain DSM 17950 / CFBP 7177 / CIP 109463 / NCPPB 4357 / Et1/99)</name>
    <dbReference type="NCBI Taxonomy" id="465817"/>
    <lineage>
        <taxon>Bacteria</taxon>
        <taxon>Pseudomonadati</taxon>
        <taxon>Pseudomonadota</taxon>
        <taxon>Gammaproteobacteria</taxon>
        <taxon>Enterobacterales</taxon>
        <taxon>Erwiniaceae</taxon>
        <taxon>Erwinia</taxon>
    </lineage>
</organism>
<gene>
    <name evidence="1" type="primary">ung</name>
    <name type="ordered locus">ETA_09790</name>
</gene>
<accession>B2VEC7</accession>
<feature type="chain" id="PRO_1000096580" description="Uracil-DNA glycosylase">
    <location>
        <begin position="1"/>
        <end position="227"/>
    </location>
</feature>
<feature type="active site" description="Proton acceptor" evidence="1">
    <location>
        <position position="64"/>
    </location>
</feature>
<comment type="function">
    <text evidence="1">Excises uracil residues from the DNA which can arise as a result of misincorporation of dUMP residues by DNA polymerase or due to deamination of cytosine.</text>
</comment>
<comment type="catalytic activity">
    <reaction evidence="1">
        <text>Hydrolyzes single-stranded DNA or mismatched double-stranded DNA and polynucleotides, releasing free uracil.</text>
        <dbReference type="EC" id="3.2.2.27"/>
    </reaction>
</comment>
<comment type="subcellular location">
    <subcellularLocation>
        <location evidence="1">Cytoplasm</location>
    </subcellularLocation>
</comment>
<comment type="similarity">
    <text evidence="1">Belongs to the uracil-DNA glycosylase (UDG) superfamily. UNG family.</text>
</comment>
<proteinExistence type="inferred from homology"/>
<keyword id="KW-0963">Cytoplasm</keyword>
<keyword id="KW-0227">DNA damage</keyword>
<keyword id="KW-0234">DNA repair</keyword>
<keyword id="KW-0378">Hydrolase</keyword>
<keyword id="KW-1185">Reference proteome</keyword>
<protein>
    <recommendedName>
        <fullName evidence="1">Uracil-DNA glycosylase</fullName>
        <shortName evidence="1">UDG</shortName>
        <ecNumber evidence="1">3.2.2.27</ecNumber>
    </recommendedName>
</protein>
<reference key="1">
    <citation type="journal article" date="2008" name="Environ. Microbiol.">
        <title>The genome of Erwinia tasmaniensis strain Et1/99, a non-pathogenic bacterium in the genus Erwinia.</title>
        <authorList>
            <person name="Kube M."/>
            <person name="Migdoll A.M."/>
            <person name="Mueller I."/>
            <person name="Kuhl H."/>
            <person name="Beck A."/>
            <person name="Reinhardt R."/>
            <person name="Geider K."/>
        </authorList>
    </citation>
    <scope>NUCLEOTIDE SEQUENCE [LARGE SCALE GENOMIC DNA]</scope>
    <source>
        <strain>DSM 17950 / CFBP 7177 / CIP 109463 / NCPPB 4357 / Et1/99</strain>
    </source>
</reference>
<evidence type="ECO:0000255" key="1">
    <source>
        <dbReference type="HAMAP-Rule" id="MF_00148"/>
    </source>
</evidence>
<dbReference type="EC" id="3.2.2.27" evidence="1"/>
<dbReference type="EMBL" id="CU468135">
    <property type="protein sequence ID" value="CAO96025.1"/>
    <property type="molecule type" value="Genomic_DNA"/>
</dbReference>
<dbReference type="RefSeq" id="WP_012440726.1">
    <property type="nucleotide sequence ID" value="NC_010694.1"/>
</dbReference>
<dbReference type="SMR" id="B2VEC7"/>
<dbReference type="STRING" id="465817.ETA_09790"/>
<dbReference type="KEGG" id="eta:ETA_09790"/>
<dbReference type="eggNOG" id="COG0692">
    <property type="taxonomic scope" value="Bacteria"/>
</dbReference>
<dbReference type="HOGENOM" id="CLU_032162_3_1_6"/>
<dbReference type="OrthoDB" id="9804372at2"/>
<dbReference type="Proteomes" id="UP000001726">
    <property type="component" value="Chromosome"/>
</dbReference>
<dbReference type="GO" id="GO:0005737">
    <property type="term" value="C:cytoplasm"/>
    <property type="evidence" value="ECO:0007669"/>
    <property type="project" value="UniProtKB-SubCell"/>
</dbReference>
<dbReference type="GO" id="GO:0004844">
    <property type="term" value="F:uracil DNA N-glycosylase activity"/>
    <property type="evidence" value="ECO:0007669"/>
    <property type="project" value="UniProtKB-UniRule"/>
</dbReference>
<dbReference type="GO" id="GO:0097510">
    <property type="term" value="P:base-excision repair, AP site formation via deaminated base removal"/>
    <property type="evidence" value="ECO:0007669"/>
    <property type="project" value="TreeGrafter"/>
</dbReference>
<dbReference type="CDD" id="cd10027">
    <property type="entry name" value="UDG-F1-like"/>
    <property type="match status" value="1"/>
</dbReference>
<dbReference type="FunFam" id="3.40.470.10:FF:000001">
    <property type="entry name" value="Uracil-DNA glycosylase"/>
    <property type="match status" value="1"/>
</dbReference>
<dbReference type="Gene3D" id="3.40.470.10">
    <property type="entry name" value="Uracil-DNA glycosylase-like domain"/>
    <property type="match status" value="1"/>
</dbReference>
<dbReference type="HAMAP" id="MF_00148">
    <property type="entry name" value="UDG"/>
    <property type="match status" value="1"/>
</dbReference>
<dbReference type="InterPro" id="IPR002043">
    <property type="entry name" value="UDG_fam1"/>
</dbReference>
<dbReference type="InterPro" id="IPR018085">
    <property type="entry name" value="Ura-DNA_Glyclase_AS"/>
</dbReference>
<dbReference type="InterPro" id="IPR005122">
    <property type="entry name" value="Uracil-DNA_glycosylase-like"/>
</dbReference>
<dbReference type="InterPro" id="IPR036895">
    <property type="entry name" value="Uracil-DNA_glycosylase-like_sf"/>
</dbReference>
<dbReference type="NCBIfam" id="NF003588">
    <property type="entry name" value="PRK05254.1-1"/>
    <property type="match status" value="1"/>
</dbReference>
<dbReference type="NCBIfam" id="NF003589">
    <property type="entry name" value="PRK05254.1-2"/>
    <property type="match status" value="1"/>
</dbReference>
<dbReference type="NCBIfam" id="NF003591">
    <property type="entry name" value="PRK05254.1-4"/>
    <property type="match status" value="1"/>
</dbReference>
<dbReference type="NCBIfam" id="NF003592">
    <property type="entry name" value="PRK05254.1-5"/>
    <property type="match status" value="1"/>
</dbReference>
<dbReference type="NCBIfam" id="TIGR00628">
    <property type="entry name" value="ung"/>
    <property type="match status" value="1"/>
</dbReference>
<dbReference type="PANTHER" id="PTHR11264">
    <property type="entry name" value="URACIL-DNA GLYCOSYLASE"/>
    <property type="match status" value="1"/>
</dbReference>
<dbReference type="PANTHER" id="PTHR11264:SF0">
    <property type="entry name" value="URACIL-DNA GLYCOSYLASE"/>
    <property type="match status" value="1"/>
</dbReference>
<dbReference type="Pfam" id="PF03167">
    <property type="entry name" value="UDG"/>
    <property type="match status" value="1"/>
</dbReference>
<dbReference type="SMART" id="SM00986">
    <property type="entry name" value="UDG"/>
    <property type="match status" value="1"/>
</dbReference>
<dbReference type="SMART" id="SM00987">
    <property type="entry name" value="UreE_C"/>
    <property type="match status" value="1"/>
</dbReference>
<dbReference type="SUPFAM" id="SSF52141">
    <property type="entry name" value="Uracil-DNA glycosylase-like"/>
    <property type="match status" value="1"/>
</dbReference>
<dbReference type="PROSITE" id="PS00130">
    <property type="entry name" value="U_DNA_GLYCOSYLASE"/>
    <property type="match status" value="1"/>
</dbReference>